<feature type="chain" id="PRO_0000310128" description="Probable nicotinate-nucleotide adenylyltransferase">
    <location>
        <begin position="1"/>
        <end position="177"/>
    </location>
</feature>
<proteinExistence type="inferred from homology"/>
<keyword id="KW-0067">ATP-binding</keyword>
<keyword id="KW-0520">NAD</keyword>
<keyword id="KW-0547">Nucleotide-binding</keyword>
<keyword id="KW-0548">Nucleotidyltransferase</keyword>
<keyword id="KW-0662">Pyridine nucleotide biosynthesis</keyword>
<keyword id="KW-1185">Reference proteome</keyword>
<keyword id="KW-0808">Transferase</keyword>
<accession>A6Q541</accession>
<dbReference type="EC" id="2.7.7.18" evidence="1"/>
<dbReference type="EMBL" id="AP009178">
    <property type="protein sequence ID" value="BAF70600.1"/>
    <property type="molecule type" value="Genomic_DNA"/>
</dbReference>
<dbReference type="RefSeq" id="WP_012082863.1">
    <property type="nucleotide sequence ID" value="NC_009662.1"/>
</dbReference>
<dbReference type="SMR" id="A6Q541"/>
<dbReference type="FunCoup" id="A6Q541">
    <property type="interactions" value="279"/>
</dbReference>
<dbReference type="STRING" id="387092.NIS_1493"/>
<dbReference type="KEGG" id="nis:NIS_1493"/>
<dbReference type="eggNOG" id="COG1057">
    <property type="taxonomic scope" value="Bacteria"/>
</dbReference>
<dbReference type="HOGENOM" id="CLU_069765_3_1_7"/>
<dbReference type="InParanoid" id="A6Q541"/>
<dbReference type="OrthoDB" id="5295945at2"/>
<dbReference type="UniPathway" id="UPA00253">
    <property type="reaction ID" value="UER00332"/>
</dbReference>
<dbReference type="Proteomes" id="UP000001118">
    <property type="component" value="Chromosome"/>
</dbReference>
<dbReference type="GO" id="GO:0005524">
    <property type="term" value="F:ATP binding"/>
    <property type="evidence" value="ECO:0007669"/>
    <property type="project" value="UniProtKB-KW"/>
</dbReference>
<dbReference type="GO" id="GO:0004515">
    <property type="term" value="F:nicotinate-nucleotide adenylyltransferase activity"/>
    <property type="evidence" value="ECO:0007669"/>
    <property type="project" value="UniProtKB-UniRule"/>
</dbReference>
<dbReference type="GO" id="GO:0009435">
    <property type="term" value="P:NAD biosynthetic process"/>
    <property type="evidence" value="ECO:0007669"/>
    <property type="project" value="UniProtKB-UniRule"/>
</dbReference>
<dbReference type="CDD" id="cd02165">
    <property type="entry name" value="NMNAT"/>
    <property type="match status" value="1"/>
</dbReference>
<dbReference type="Gene3D" id="3.40.50.620">
    <property type="entry name" value="HUPs"/>
    <property type="match status" value="1"/>
</dbReference>
<dbReference type="HAMAP" id="MF_00244">
    <property type="entry name" value="NaMN_adenylyltr"/>
    <property type="match status" value="1"/>
</dbReference>
<dbReference type="InterPro" id="IPR004821">
    <property type="entry name" value="Cyt_trans-like"/>
</dbReference>
<dbReference type="InterPro" id="IPR005248">
    <property type="entry name" value="NadD/NMNAT"/>
</dbReference>
<dbReference type="InterPro" id="IPR014729">
    <property type="entry name" value="Rossmann-like_a/b/a_fold"/>
</dbReference>
<dbReference type="NCBIfam" id="TIGR00125">
    <property type="entry name" value="cyt_tran_rel"/>
    <property type="match status" value="1"/>
</dbReference>
<dbReference type="NCBIfam" id="TIGR00482">
    <property type="entry name" value="nicotinate (nicotinamide) nucleotide adenylyltransferase"/>
    <property type="match status" value="1"/>
</dbReference>
<dbReference type="PANTHER" id="PTHR39321">
    <property type="entry name" value="NICOTINATE-NUCLEOTIDE ADENYLYLTRANSFERASE-RELATED"/>
    <property type="match status" value="1"/>
</dbReference>
<dbReference type="PANTHER" id="PTHR39321:SF3">
    <property type="entry name" value="PHOSPHOPANTETHEINE ADENYLYLTRANSFERASE"/>
    <property type="match status" value="1"/>
</dbReference>
<dbReference type="Pfam" id="PF01467">
    <property type="entry name" value="CTP_transf_like"/>
    <property type="match status" value="1"/>
</dbReference>
<dbReference type="SUPFAM" id="SSF52374">
    <property type="entry name" value="Nucleotidylyl transferase"/>
    <property type="match status" value="1"/>
</dbReference>
<name>NADD_NITSB</name>
<comment type="function">
    <text evidence="1">Catalyzes the reversible adenylation of nicotinate mononucleotide (NaMN) to nicotinic acid adenine dinucleotide (NaAD).</text>
</comment>
<comment type="catalytic activity">
    <reaction evidence="1">
        <text>nicotinate beta-D-ribonucleotide + ATP + H(+) = deamido-NAD(+) + diphosphate</text>
        <dbReference type="Rhea" id="RHEA:22860"/>
        <dbReference type="ChEBI" id="CHEBI:15378"/>
        <dbReference type="ChEBI" id="CHEBI:30616"/>
        <dbReference type="ChEBI" id="CHEBI:33019"/>
        <dbReference type="ChEBI" id="CHEBI:57502"/>
        <dbReference type="ChEBI" id="CHEBI:58437"/>
        <dbReference type="EC" id="2.7.7.18"/>
    </reaction>
</comment>
<comment type="pathway">
    <text evidence="1">Cofactor biosynthesis; NAD(+) biosynthesis; deamido-NAD(+) from nicotinate D-ribonucleotide: step 1/1.</text>
</comment>
<comment type="similarity">
    <text evidence="1">Belongs to the NadD family.</text>
</comment>
<protein>
    <recommendedName>
        <fullName evidence="1">Probable nicotinate-nucleotide adenylyltransferase</fullName>
        <ecNumber evidence="1">2.7.7.18</ecNumber>
    </recommendedName>
    <alternativeName>
        <fullName evidence="1">Deamido-NAD(+) diphosphorylase</fullName>
    </alternativeName>
    <alternativeName>
        <fullName evidence="1">Deamido-NAD(+) pyrophosphorylase</fullName>
    </alternativeName>
    <alternativeName>
        <fullName evidence="1">Nicotinate mononucleotide adenylyltransferase</fullName>
        <shortName evidence="1">NaMN adenylyltransferase</shortName>
    </alternativeName>
</protein>
<evidence type="ECO:0000255" key="1">
    <source>
        <dbReference type="HAMAP-Rule" id="MF_00244"/>
    </source>
</evidence>
<reference key="1">
    <citation type="journal article" date="2005" name="Environ. Microbiol.">
        <title>Distribution, phylogenetic diversity and physiological characteristics of epsilon-Proteobacteria in a deep-sea hydrothermal field.</title>
        <authorList>
            <person name="Nakagawa S."/>
            <person name="Takai K."/>
            <person name="Inagaki F."/>
            <person name="Hirayama H."/>
            <person name="Nunoura T."/>
            <person name="Horikoshi K."/>
            <person name="Sako Y."/>
        </authorList>
    </citation>
    <scope>NUCLEOTIDE SEQUENCE [GENOMIC DNA]</scope>
    <source>
        <strain>SB155-2</strain>
    </source>
</reference>
<reference key="2">
    <citation type="journal article" date="2007" name="Proc. Natl. Acad. Sci. U.S.A.">
        <title>Deep-sea vent epsilon-proteobacterial genomes provide insights into emergence of pathogens.</title>
        <authorList>
            <person name="Nakagawa S."/>
            <person name="Takaki Y."/>
            <person name="Shimamura S."/>
            <person name="Reysenbach A.-L."/>
            <person name="Takai K."/>
            <person name="Horikoshi K."/>
        </authorList>
    </citation>
    <scope>NUCLEOTIDE SEQUENCE [LARGE SCALE GENOMIC DNA]</scope>
    <source>
        <strain>SB155-2</strain>
    </source>
</reference>
<sequence length="177" mass="21062">MKIAIFGGSFDPPHKGHIAIVKRALEELDIDYVIIVPTYLNPFKTSFQASPSLRLRWLRKIFLPYNRVKICDYEVRKGRPTYAIETVEFLRRKYAPKKLYYIIGSDNLPTLHKWHKYQKLSHLVQFVVATRKGYKVPKKYKMIEVHEDISSTELRIHPKKRYLPPIVAEEIIRFYRS</sequence>
<gene>
    <name evidence="1" type="primary">nadD</name>
    <name type="ordered locus">NIS_1493</name>
</gene>
<organism>
    <name type="scientific">Nitratiruptor sp. (strain SB155-2)</name>
    <dbReference type="NCBI Taxonomy" id="387092"/>
    <lineage>
        <taxon>Bacteria</taxon>
        <taxon>Pseudomonadati</taxon>
        <taxon>Campylobacterota</taxon>
        <taxon>Epsilonproteobacteria</taxon>
        <taxon>Nautiliales</taxon>
        <taxon>Nitratiruptoraceae</taxon>
        <taxon>Nitratiruptor</taxon>
    </lineage>
</organism>